<dbReference type="EMBL" id="CP000512">
    <property type="protein sequence ID" value="ABM33136.1"/>
    <property type="molecule type" value="Genomic_DNA"/>
</dbReference>
<dbReference type="RefSeq" id="WP_011795661.1">
    <property type="nucleotide sequence ID" value="NC_008752.1"/>
</dbReference>
<dbReference type="SMR" id="A1TQ98"/>
<dbReference type="STRING" id="397945.Aave_2563"/>
<dbReference type="GeneID" id="79792150"/>
<dbReference type="KEGG" id="aav:Aave_2563"/>
<dbReference type="eggNOG" id="COG2835">
    <property type="taxonomic scope" value="Bacteria"/>
</dbReference>
<dbReference type="HOGENOM" id="CLU_155659_2_2_4"/>
<dbReference type="OrthoDB" id="9812205at2"/>
<dbReference type="Proteomes" id="UP000002596">
    <property type="component" value="Chromosome"/>
</dbReference>
<dbReference type="GO" id="GO:0005829">
    <property type="term" value="C:cytosol"/>
    <property type="evidence" value="ECO:0007669"/>
    <property type="project" value="TreeGrafter"/>
</dbReference>
<dbReference type="FunFam" id="2.20.25.10:FF:000002">
    <property type="entry name" value="UPF0434 protein YcaR"/>
    <property type="match status" value="1"/>
</dbReference>
<dbReference type="Gene3D" id="2.20.25.10">
    <property type="match status" value="1"/>
</dbReference>
<dbReference type="HAMAP" id="MF_01187">
    <property type="entry name" value="UPF0434"/>
    <property type="match status" value="1"/>
</dbReference>
<dbReference type="InterPro" id="IPR005651">
    <property type="entry name" value="Trm112-like"/>
</dbReference>
<dbReference type="PANTHER" id="PTHR33505:SF4">
    <property type="entry name" value="PROTEIN PREY, MITOCHONDRIAL"/>
    <property type="match status" value="1"/>
</dbReference>
<dbReference type="PANTHER" id="PTHR33505">
    <property type="entry name" value="ZGC:162634"/>
    <property type="match status" value="1"/>
</dbReference>
<dbReference type="Pfam" id="PF03966">
    <property type="entry name" value="Trm112p"/>
    <property type="match status" value="1"/>
</dbReference>
<dbReference type="SUPFAM" id="SSF158997">
    <property type="entry name" value="Trm112p-like"/>
    <property type="match status" value="1"/>
</dbReference>
<proteinExistence type="inferred from homology"/>
<organism>
    <name type="scientific">Paracidovorax citrulli (strain AAC00-1)</name>
    <name type="common">Acidovorax citrulli</name>
    <dbReference type="NCBI Taxonomy" id="397945"/>
    <lineage>
        <taxon>Bacteria</taxon>
        <taxon>Pseudomonadati</taxon>
        <taxon>Pseudomonadota</taxon>
        <taxon>Betaproteobacteria</taxon>
        <taxon>Burkholderiales</taxon>
        <taxon>Comamonadaceae</taxon>
        <taxon>Paracidovorax</taxon>
    </lineage>
</organism>
<feature type="chain" id="PRO_0000291047" description="UPF0434 protein Aave_2563">
    <location>
        <begin position="1"/>
        <end position="60"/>
    </location>
</feature>
<gene>
    <name type="ordered locus">Aave_2563</name>
</gene>
<reference key="1">
    <citation type="submission" date="2006-12" db="EMBL/GenBank/DDBJ databases">
        <title>Complete sequence of Acidovorax avenae subsp. citrulli AAC00-1.</title>
        <authorList>
            <person name="Copeland A."/>
            <person name="Lucas S."/>
            <person name="Lapidus A."/>
            <person name="Barry K."/>
            <person name="Detter J.C."/>
            <person name="Glavina del Rio T."/>
            <person name="Dalin E."/>
            <person name="Tice H."/>
            <person name="Pitluck S."/>
            <person name="Kiss H."/>
            <person name="Brettin T."/>
            <person name="Bruce D."/>
            <person name="Han C."/>
            <person name="Tapia R."/>
            <person name="Gilna P."/>
            <person name="Schmutz J."/>
            <person name="Larimer F."/>
            <person name="Land M."/>
            <person name="Hauser L."/>
            <person name="Kyrpides N."/>
            <person name="Kim E."/>
            <person name="Stahl D."/>
            <person name="Richardson P."/>
        </authorList>
    </citation>
    <scope>NUCLEOTIDE SEQUENCE [LARGE SCALE GENOMIC DNA]</scope>
    <source>
        <strain>AAC00-1</strain>
    </source>
</reference>
<sequence length="60" mass="6736">MDPKLLELLVCPVTKGPLTYDRERDELVSRSARLAYPVRDGIPVLLETEARPLTDAELEA</sequence>
<name>Y2563_PARC0</name>
<protein>
    <recommendedName>
        <fullName evidence="1">UPF0434 protein Aave_2563</fullName>
    </recommendedName>
</protein>
<evidence type="ECO:0000255" key="1">
    <source>
        <dbReference type="HAMAP-Rule" id="MF_01187"/>
    </source>
</evidence>
<comment type="similarity">
    <text evidence="1">Belongs to the UPF0434 family.</text>
</comment>
<accession>A1TQ98</accession>